<gene>
    <name type="primary">ASTN2</name>
    <name type="synonym">KIAA0634</name>
</gene>
<protein>
    <recommendedName>
        <fullName>Astrotactin-2</fullName>
    </recommendedName>
</protein>
<comment type="function">
    <text evidence="2 8">Mediates recycling of the neuronal cell adhesion molecule ASTN1 to the anterior pole of the cell membrane in migrating neurons. Promotes ASTN1 internalization and intracellular transport of endocytosed ASTN1 (By similarity). Selectively binds inositol-4,5-bisphosphate, inositol-3,4,5-trisphosphate and inositol-1,3,4,5-tetrakisphosphate, suggesting it is recruited to membranes that contain lipids with a phosphoinositide headgroup (Ref.6).</text>
</comment>
<comment type="subunit">
    <text evidence="2">Interacts with ASTN1; the interaction is not calcium-dependent.</text>
</comment>
<comment type="subcellular location">
    <subcellularLocation>
        <location evidence="2">Membrane</location>
        <topology evidence="2">Multi-pass membrane protein</topology>
    </subcellularLocation>
    <subcellularLocation>
        <location evidence="2">Perikaryon</location>
    </subcellularLocation>
    <subcellularLocation>
        <location evidence="2">Cytoplasm</location>
        <location evidence="2">Cell cortex</location>
    </subcellularLocation>
    <subcellularLocation>
        <location evidence="2">Early endosome</location>
    </subcellularLocation>
    <subcellularLocation>
        <location evidence="2">Late endosome</location>
    </subcellularLocation>
    <subcellularLocation>
        <location evidence="2">Cytoplasmic vesicle</location>
        <location evidence="2">Clathrin-coated vesicle</location>
    </subcellularLocation>
    <subcellularLocation>
        <location evidence="2">Cytoplasmic vesicle</location>
    </subcellularLocation>
    <text evidence="2">Integral membrane protein not detected at the cell membrane. Detected in cytoplasmic vesicles in the cell cortex, close to the anterior pole of migrating neurons. Detected at the base of the leading process in migrating neurons.</text>
</comment>
<comment type="alternative products">
    <event type="alternative splicing"/>
    <isoform>
        <id>O75129-1</id>
        <name>1</name>
        <sequence type="displayed"/>
    </isoform>
    <isoform>
        <id>O75129-2</id>
        <name>2</name>
        <sequence type="described" ref="VSP_028932"/>
    </isoform>
    <isoform>
        <id>O75129-3</id>
        <name>3</name>
        <sequence type="described" ref="VSP_028933"/>
    </isoform>
    <isoform>
        <id>O75129-4</id>
        <name>4</name>
        <sequence type="described" ref="VSP_028931 VSP_028934"/>
    </isoform>
    <isoform>
        <id>O75129-6</id>
        <name>6</name>
        <sequence type="described" ref="VSP_028930 VSP_028937"/>
    </isoform>
</comment>
<comment type="domain">
    <text evidence="8">The C-terminal region after the fibronectin type-III domain presents structural similarity to annexin domains and binds calcium ions.</text>
</comment>
<comment type="similarity">
    <text evidence="12">Belongs to the astrotactin family.</text>
</comment>
<comment type="sequence caution" evidence="12">
    <conflict type="erroneous initiation">
        <sequence resource="EMBL-CDS" id="AAF14357"/>
    </conflict>
    <text>Truncated N-terminus.</text>
</comment>
<comment type="sequence caution" evidence="12">
    <conflict type="erroneous initiation">
        <sequence resource="EMBL-CDS" id="BAA31609"/>
    </conflict>
    <text>Extended N-terminus.</text>
</comment>
<name>ASTN2_HUMAN</name>
<evidence type="ECO:0000250" key="1"/>
<evidence type="ECO:0000250" key="2">
    <source>
        <dbReference type="UniProtKB" id="Q80Z10"/>
    </source>
</evidence>
<evidence type="ECO:0000255" key="3"/>
<evidence type="ECO:0000256" key="4">
    <source>
        <dbReference type="SAM" id="MobiDB-lite"/>
    </source>
</evidence>
<evidence type="ECO:0000269" key="5">
    <source>
    </source>
</evidence>
<evidence type="ECO:0000269" key="6">
    <source>
    </source>
</evidence>
<evidence type="ECO:0000269" key="7">
    <source>
    </source>
</evidence>
<evidence type="ECO:0000269" key="8">
    <source ref="6"/>
</evidence>
<evidence type="ECO:0000303" key="9">
    <source>
    </source>
</evidence>
<evidence type="ECO:0000303" key="10">
    <source>
    </source>
</evidence>
<evidence type="ECO:0000303" key="11">
    <source ref="4"/>
</evidence>
<evidence type="ECO:0000305" key="12"/>
<evidence type="ECO:0007829" key="13">
    <source>
        <dbReference type="PDB" id="5J67"/>
    </source>
</evidence>
<sequence length="1339" mass="148243">MAAAGARLSPGPGSGLRGRPRLCFHPGPPPLLPLLLLFLLLLPPPPLLAGATAAASREPDSPCRLKTVTVSTLPALRESDIGWSGARAGAGAGTGAGAAAAAASPGSPGSAGTAAESRLLLFVRNELPGRIAVQDDLDNTELPFFTLEMSGTAADISLVHWRQQWLENGTLYFHVSMSSSGQLAQATAPTLQEPSEIVEEQMHILHISVMGGLIALLLLLLVFTVALYAQRRWQKRRRIPQKSASTEATHEIHYIPSVLLGPQARESFRSSRLQTHNSVIGVPIRETPILDDYDCEEDEEPPRRANHVSREDEFGSQVTHTLDSLGHPGEEKVDFEKKAAAEATQETVESLMQKFKESFRANTPIEIGQLQPPLRSTSAGKRKRRSKSRGGISFGRAKGTSGSEADDETQLTFYTEQYRSRRRSKGLLKSPVNKTALTLIAVSSCILAMVCGSQMSCPLTVKVTLHVPEHFIADGSSFVVSEGSYLDISDWLNPAKLSLYYQINATSPWVRDLCGQRTTDACEQLCDPETGECSCHEGYAPDPVHRHLCVRSDWGQSEGPWPYTTLERGYDLVTGEQAPEKILRSTFSLGQGLWLPVSKSFVVPPVELSINPLASCKTDVLVTEDPADVREEAMLSTYFETINDLLSSFGPVRDCSRNNGGCTRNFKCVSDRQVDSSGCVCPEELKPMKDGSGCYDHSKGIDCSDGFNGGCEQLCLQQTLPLPYDATSSTIFMFCGCVEEYKLAPDGKSCLMLSDVCEGPKCLKPDSKFNDTLFGEMLHGYNNRTQHVNQGQVFQMTFRENNFIKDFPQLADGLLVIPLPVEEQCRGVLSEPLPDLQLLTGDIRYDEAMGYPMVQQWRVRSNLYRVKLSTITLAAGFTNVLKILTKESSREELLSFIQHYGSHYIAEALYGSELTCIIHFPSKKVQQQLWLQYQKETTELGSKKELKSMPFITYLSGLLTAQMLSDDQLISGVEIRCEEKGRCPSTCHLCRRPGKEQLSPTPVLLEINRVVPLYTLIQDNGTKEAFKSALMSSYWCSGKGDVIDDWCRCDLSAFDANGLPNCSPLLQPVLRLSPTVEPSSTVVSLEWVDVQPAIGTKVSDYILQHKKVDEYTDTDLYTGEFLSFADDLLSGLGTSCVAAGRSHGEVPEVSIYSVIFKCLEPDGLYKFTLYAVDTRGRHSELSTVTLRTACPLVDDNKAEEIADKIYNLYNGYTSGKEQQMAYNTLMEVSASMLFRVQHHYNSHYEKFGDFVWRSEDELGPRKAHLILRRLERVSSHCSSLLRSAYIQSRVETVPYLFCRSEEVRPAGMVWYSILKDTKITCEEKMVSMARNTYGESKGR</sequence>
<proteinExistence type="evidence at protein level"/>
<keyword id="KW-0002">3D-structure</keyword>
<keyword id="KW-0025">Alternative splicing</keyword>
<keyword id="KW-0106">Calcium</keyword>
<keyword id="KW-0963">Cytoplasm</keyword>
<keyword id="KW-0968">Cytoplasmic vesicle</keyword>
<keyword id="KW-1015">Disulfide bond</keyword>
<keyword id="KW-0245">EGF-like domain</keyword>
<keyword id="KW-0967">Endosome</keyword>
<keyword id="KW-0325">Glycoprotein</keyword>
<keyword id="KW-0472">Membrane</keyword>
<keyword id="KW-0479">Metal-binding</keyword>
<keyword id="KW-0653">Protein transport</keyword>
<keyword id="KW-1267">Proteomics identification</keyword>
<keyword id="KW-1185">Reference proteome</keyword>
<keyword id="KW-0677">Repeat</keyword>
<keyword id="KW-0732">Signal</keyword>
<keyword id="KW-0812">Transmembrane</keyword>
<keyword id="KW-1133">Transmembrane helix</keyword>
<keyword id="KW-0813">Transport</keyword>
<feature type="signal peptide" evidence="3">
    <location>
        <begin position="1"/>
        <end position="49"/>
    </location>
</feature>
<feature type="chain" id="PRO_0000308252" description="Astrotactin-2">
    <location>
        <begin position="50"/>
        <end position="1339"/>
    </location>
</feature>
<feature type="topological domain" description="Lumenal" evidence="12">
    <location>
        <begin position="50"/>
        <end position="206"/>
    </location>
</feature>
<feature type="transmembrane region" description="Helical" evidence="3">
    <location>
        <begin position="207"/>
        <end position="227"/>
    </location>
</feature>
<feature type="topological domain" description="Cytoplasmic" evidence="3">
    <location>
        <begin position="228"/>
        <end position="434"/>
    </location>
</feature>
<feature type="transmembrane region" description="Helical" evidence="3">
    <location>
        <begin position="435"/>
        <end position="455"/>
    </location>
</feature>
<feature type="topological domain" description="Lumenal" evidence="12">
    <location>
        <begin position="456"/>
        <end position="1339"/>
    </location>
</feature>
<feature type="domain" description="EGF-like 1">
    <location>
        <begin position="510"/>
        <end position="550"/>
    </location>
</feature>
<feature type="domain" description="EGF-like 2">
    <location>
        <begin position="651"/>
        <end position="695"/>
    </location>
</feature>
<feature type="domain" description="EGF-like 3">
    <location>
        <begin position="699"/>
        <end position="751"/>
    </location>
</feature>
<feature type="domain" description="Fibronectin type-III">
    <location>
        <begin position="1065"/>
        <end position="1188"/>
    </location>
</feature>
<feature type="region of interest" description="Disordered" evidence="4">
    <location>
        <begin position="296"/>
        <end position="316"/>
    </location>
</feature>
<feature type="region of interest" description="Disordered" evidence="4">
    <location>
        <begin position="363"/>
        <end position="408"/>
    </location>
</feature>
<feature type="glycosylation site" description="N-linked (GlcNAc...) asparagine" evidence="3">
    <location>
        <position position="168"/>
    </location>
</feature>
<feature type="glycosylation site" description="N-linked (GlcNAc...) asparagine" evidence="8">
    <location>
        <position position="770"/>
    </location>
</feature>
<feature type="glycosylation site" description="N-linked (GlcNAc...) asparagine" evidence="8">
    <location>
        <position position="783"/>
    </location>
</feature>
<feature type="glycosylation site" description="N-linked (GlcNAc...) asparagine" evidence="3">
    <location>
        <position position="1020"/>
    </location>
</feature>
<feature type="disulfide bond" evidence="1">
    <location>
        <begin position="514"/>
        <end position="526"/>
    </location>
</feature>
<feature type="disulfide bond" evidence="1">
    <location>
        <begin position="522"/>
        <end position="533"/>
    </location>
</feature>
<feature type="disulfide bond" evidence="1">
    <location>
        <begin position="535"/>
        <end position="549"/>
    </location>
</feature>
<feature type="disulfide bond" evidence="1">
    <location>
        <begin position="655"/>
        <end position="668"/>
    </location>
</feature>
<feature type="disulfide bond" evidence="1">
    <location>
        <begin position="662"/>
        <end position="679"/>
    </location>
</feature>
<feature type="disulfide bond" evidence="1">
    <location>
        <begin position="681"/>
        <end position="694"/>
    </location>
</feature>
<feature type="disulfide bond" evidence="1">
    <location>
        <begin position="703"/>
        <end position="715"/>
    </location>
</feature>
<feature type="disulfide bond" evidence="1">
    <location>
        <begin position="711"/>
        <end position="735"/>
    </location>
</feature>
<feature type="disulfide bond" evidence="1">
    <location>
        <begin position="737"/>
        <end position="750"/>
    </location>
</feature>
<feature type="disulfide bond" evidence="8">
    <location>
        <begin position="825"/>
        <end position="987"/>
    </location>
</feature>
<feature type="disulfide bond" evidence="8">
    <location>
        <begin position="916"/>
        <end position="977"/>
    </location>
</feature>
<feature type="disulfide bond" evidence="8">
    <location>
        <begin position="983"/>
        <end position="990"/>
    </location>
</feature>
<feature type="disulfide bond" evidence="8">
    <location>
        <begin position="1036"/>
        <end position="1047"/>
    </location>
</feature>
<feature type="disulfide bond" evidence="8">
    <location>
        <begin position="1049"/>
        <end position="1062"/>
    </location>
</feature>
<feature type="disulfide bond" evidence="8">
    <location>
        <begin position="1136"/>
        <end position="1158"/>
    </location>
</feature>
<feature type="disulfide bond" evidence="8">
    <location>
        <begin position="1190"/>
        <end position="1277"/>
    </location>
</feature>
<feature type="disulfide bond" evidence="8">
    <location>
        <begin position="1298"/>
        <end position="1321"/>
    </location>
</feature>
<feature type="splice variant" id="VSP_028930" description="In isoform 6." evidence="9">
    <location>
        <begin position="1"/>
        <end position="948"/>
    </location>
</feature>
<feature type="splice variant" id="VSP_028931" description="In isoform 4." evidence="9">
    <location>
        <begin position="1"/>
        <end position="899"/>
    </location>
</feature>
<feature type="splice variant" id="VSP_028932" description="In isoform 2." evidence="9 10 11">
    <location>
        <begin position="339"/>
        <end position="389"/>
    </location>
</feature>
<feature type="splice variant" id="VSP_028933" description="In isoform 3." evidence="9">
    <location>
        <begin position="584"/>
        <end position="587"/>
    </location>
</feature>
<feature type="splice variant" id="VSP_028934" description="In isoform 4." evidence="9">
    <original>YGSHYIAEALYGSELTCIIHFPSKKVQQQLWLQYQK</original>
    <variation>MNTLLCKGMFCLLSWEADSRGRLGEYTLQPLSLQTE</variation>
    <location>
        <begin position="900"/>
        <end position="935"/>
    </location>
</feature>
<feature type="splice variant" id="VSP_028937" description="In isoform 6." evidence="9">
    <original>GESKGR</original>
    <variation>YLTLSKVSPF</variation>
    <location>
        <begin position="1334"/>
        <end position="1339"/>
    </location>
</feature>
<feature type="sequence variant" id="VAR_036765" description="In dbSNP:rs16933591.">
    <original>V</original>
    <variation>I</variation>
    <location>
        <position position="70"/>
    </location>
</feature>
<feature type="sequence variant" id="VAR_064699" description="Found in a clear cell renal carcinoma case; somatic mutation; dbSNP:rs2133022543." evidence="6">
    <original>A</original>
    <variation>V</variation>
    <location>
        <position position="229"/>
    </location>
</feature>
<feature type="sequence variant" id="VAR_084650" description="Found in a patient with global developmental delay; uncertain significance; dbSNP:rs769480844." evidence="7">
    <original>D</original>
    <variation>H</variation>
    <location>
        <position position="298"/>
    </location>
</feature>
<feature type="sequence variant" id="VAR_036766" description="In dbSNP:rs3818503.">
    <original>R</original>
    <variation>H</variation>
    <location>
        <position position="865"/>
    </location>
</feature>
<feature type="sequence variant" id="VAR_036767" description="In dbSNP:rs16933591.">
    <original>V</original>
    <variation>I</variation>
    <location>
        <position position="1149"/>
    </location>
</feature>
<feature type="sequence variant" id="VAR_036768" description="In a breast cancer sample; somatic mutation." evidence="5">
    <original>V</original>
    <variation>L</variation>
    <location>
        <position position="1293"/>
    </location>
</feature>
<feature type="mutagenesis site" description="Abolishes inositol-4,5-bisphosphate binding. Strongly reduces affinity for inositol-3,4,5-trisphosphate." evidence="8">
    <original>R</original>
    <variation>T</variation>
    <location>
        <position position="1175"/>
    </location>
</feature>
<feature type="sequence conflict" description="In Ref. 3; AAH29272." evidence="12" ref="3">
    <original>T</original>
    <variation>M</variation>
    <location>
        <position position="1320"/>
    </location>
</feature>
<feature type="turn" evidence="13">
    <location>
        <begin position="777"/>
        <end position="779"/>
    </location>
</feature>
<feature type="strand" evidence="13">
    <location>
        <begin position="783"/>
        <end position="785"/>
    </location>
</feature>
<feature type="strand" evidence="13">
    <location>
        <begin position="805"/>
        <end position="807"/>
    </location>
</feature>
<feature type="strand" evidence="13">
    <location>
        <begin position="814"/>
        <end position="818"/>
    </location>
</feature>
<feature type="turn" evidence="13">
    <location>
        <begin position="821"/>
        <end position="825"/>
    </location>
</feature>
<feature type="strand" evidence="13">
    <location>
        <begin position="826"/>
        <end position="829"/>
    </location>
</feature>
<feature type="helix" evidence="13">
    <location>
        <begin position="836"/>
        <end position="839"/>
    </location>
</feature>
<feature type="strand" evidence="13">
    <location>
        <begin position="840"/>
        <end position="843"/>
    </location>
</feature>
<feature type="turn" evidence="13">
    <location>
        <begin position="847"/>
        <end position="849"/>
    </location>
</feature>
<feature type="strand" evidence="13">
    <location>
        <begin position="853"/>
        <end position="860"/>
    </location>
</feature>
<feature type="strand" evidence="13">
    <location>
        <begin position="864"/>
        <end position="868"/>
    </location>
</feature>
<feature type="helix" evidence="13">
    <location>
        <begin position="875"/>
        <end position="886"/>
    </location>
</feature>
<feature type="helix" evidence="13">
    <location>
        <begin position="890"/>
        <end position="900"/>
    </location>
</feature>
<feature type="strand" evidence="13">
    <location>
        <begin position="902"/>
        <end position="911"/>
    </location>
</feature>
<feature type="strand" evidence="13">
    <location>
        <begin position="913"/>
        <end position="921"/>
    </location>
</feature>
<feature type="helix" evidence="13">
    <location>
        <begin position="923"/>
        <end position="937"/>
    </location>
</feature>
<feature type="helix" evidence="13">
    <location>
        <begin position="951"/>
        <end position="961"/>
    </location>
</feature>
<feature type="turn" evidence="13">
    <location>
        <begin position="962"/>
        <end position="964"/>
    </location>
</feature>
<feature type="turn" evidence="13">
    <location>
        <begin position="969"/>
        <end position="972"/>
    </location>
</feature>
<feature type="strand" evidence="13">
    <location>
        <begin position="974"/>
        <end position="981"/>
    </location>
</feature>
<feature type="strand" evidence="13">
    <location>
        <begin position="984"/>
        <end position="986"/>
    </location>
</feature>
<feature type="strand" evidence="13">
    <location>
        <begin position="988"/>
        <end position="990"/>
    </location>
</feature>
<feature type="turn" evidence="13">
    <location>
        <begin position="993"/>
        <end position="995"/>
    </location>
</feature>
<feature type="strand" evidence="13">
    <location>
        <begin position="997"/>
        <end position="999"/>
    </location>
</feature>
<feature type="strand" evidence="13">
    <location>
        <begin position="1003"/>
        <end position="1012"/>
    </location>
</feature>
<feature type="helix" evidence="13">
    <location>
        <begin position="1013"/>
        <end position="1016"/>
    </location>
</feature>
<feature type="helix" evidence="13">
    <location>
        <begin position="1020"/>
        <end position="1035"/>
    </location>
</feature>
<feature type="strand" evidence="13">
    <location>
        <begin position="1039"/>
        <end position="1043"/>
    </location>
</feature>
<feature type="strand" evidence="13">
    <location>
        <begin position="1046"/>
        <end position="1049"/>
    </location>
</feature>
<feature type="strand" evidence="13">
    <location>
        <begin position="1083"/>
        <end position="1088"/>
    </location>
</feature>
<feature type="strand" evidence="13">
    <location>
        <begin position="1093"/>
        <end position="1095"/>
    </location>
</feature>
<feature type="strand" evidence="13">
    <location>
        <begin position="1098"/>
        <end position="1108"/>
    </location>
</feature>
<feature type="strand" evidence="13">
    <location>
        <begin position="1110"/>
        <end position="1113"/>
    </location>
</feature>
<feature type="strand" evidence="13">
    <location>
        <begin position="1120"/>
        <end position="1123"/>
    </location>
</feature>
<feature type="helix" evidence="13">
    <location>
        <begin position="1124"/>
        <end position="1128"/>
    </location>
</feature>
<feature type="turn" evidence="13">
    <location>
        <begin position="1134"/>
        <end position="1136"/>
    </location>
</feature>
<feature type="strand" evidence="13">
    <location>
        <begin position="1137"/>
        <end position="1143"/>
    </location>
</feature>
<feature type="strand" evidence="13">
    <location>
        <begin position="1145"/>
        <end position="1148"/>
    </location>
</feature>
<feature type="strand" evidence="13">
    <location>
        <begin position="1150"/>
        <end position="1156"/>
    </location>
</feature>
<feature type="strand" evidence="13">
    <location>
        <begin position="1164"/>
        <end position="1173"/>
    </location>
</feature>
<feature type="strand" evidence="13">
    <location>
        <begin position="1182"/>
        <end position="1187"/>
    </location>
</feature>
<feature type="helix" evidence="13">
    <location>
        <begin position="1195"/>
        <end position="1211"/>
    </location>
</feature>
<feature type="helix" evidence="13">
    <location>
        <begin position="1215"/>
        <end position="1227"/>
    </location>
</feature>
<feature type="helix" evidence="13">
    <location>
        <begin position="1230"/>
        <end position="1244"/>
    </location>
</feature>
<feature type="helix" evidence="13">
    <location>
        <begin position="1245"/>
        <end position="1247"/>
    </location>
</feature>
<feature type="helix" evidence="13">
    <location>
        <begin position="1250"/>
        <end position="1258"/>
    </location>
</feature>
<feature type="helix" evidence="13">
    <location>
        <begin position="1260"/>
        <end position="1271"/>
    </location>
</feature>
<feature type="helix" evidence="13">
    <location>
        <begin position="1275"/>
        <end position="1280"/>
    </location>
</feature>
<feature type="strand" evidence="13">
    <location>
        <begin position="1283"/>
        <end position="1302"/>
    </location>
</feature>
<feature type="helix" evidence="13">
    <location>
        <begin position="1314"/>
        <end position="1316"/>
    </location>
</feature>
<feature type="strand" evidence="13">
    <location>
        <begin position="1319"/>
        <end position="1337"/>
    </location>
</feature>
<organism>
    <name type="scientific">Homo sapiens</name>
    <name type="common">Human</name>
    <dbReference type="NCBI Taxonomy" id="9606"/>
    <lineage>
        <taxon>Eukaryota</taxon>
        <taxon>Metazoa</taxon>
        <taxon>Chordata</taxon>
        <taxon>Craniata</taxon>
        <taxon>Vertebrata</taxon>
        <taxon>Euteleostomi</taxon>
        <taxon>Mammalia</taxon>
        <taxon>Eutheria</taxon>
        <taxon>Euarchontoglires</taxon>
        <taxon>Primates</taxon>
        <taxon>Haplorrhini</taxon>
        <taxon>Catarrhini</taxon>
        <taxon>Hominidae</taxon>
        <taxon>Homo</taxon>
    </lineage>
</organism>
<dbReference type="EMBL" id="AB014534">
    <property type="protein sequence ID" value="BAA31609.1"/>
    <property type="status" value="ALT_INIT"/>
    <property type="molecule type" value="mRNA"/>
</dbReference>
<dbReference type="EMBL" id="AL133282">
    <property type="status" value="NOT_ANNOTATED_CDS"/>
    <property type="molecule type" value="Genomic_DNA"/>
</dbReference>
<dbReference type="EMBL" id="AL133284">
    <property type="status" value="NOT_ANNOTATED_CDS"/>
    <property type="molecule type" value="Genomic_DNA"/>
</dbReference>
<dbReference type="EMBL" id="AL137024">
    <property type="status" value="NOT_ANNOTATED_CDS"/>
    <property type="molecule type" value="Genomic_DNA"/>
</dbReference>
<dbReference type="EMBL" id="AL157829">
    <property type="status" value="NOT_ANNOTATED_CDS"/>
    <property type="molecule type" value="Genomic_DNA"/>
</dbReference>
<dbReference type="EMBL" id="AL354981">
    <property type="status" value="NOT_ANNOTATED_CDS"/>
    <property type="molecule type" value="Genomic_DNA"/>
</dbReference>
<dbReference type="EMBL" id="AL355608">
    <property type="status" value="NOT_ANNOTATED_CDS"/>
    <property type="molecule type" value="Genomic_DNA"/>
</dbReference>
<dbReference type="EMBL" id="AL358792">
    <property type="status" value="NOT_ANNOTATED_CDS"/>
    <property type="molecule type" value="Genomic_DNA"/>
</dbReference>
<dbReference type="EMBL" id="AL392085">
    <property type="status" value="NOT_ANNOTATED_CDS"/>
    <property type="molecule type" value="Genomic_DNA"/>
</dbReference>
<dbReference type="EMBL" id="BC018759">
    <property type="protein sequence ID" value="AAH18759.2"/>
    <property type="molecule type" value="mRNA"/>
</dbReference>
<dbReference type="EMBL" id="BC029272">
    <property type="protein sequence ID" value="AAH29272.1"/>
    <property type="molecule type" value="mRNA"/>
</dbReference>
<dbReference type="EMBL" id="BC093835">
    <property type="protein sequence ID" value="AAH93835.2"/>
    <property type="molecule type" value="mRNA"/>
</dbReference>
<dbReference type="EMBL" id="BC101667">
    <property type="protein sequence ID" value="AAI01668.1"/>
    <property type="molecule type" value="mRNA"/>
</dbReference>
<dbReference type="EMBL" id="BC146756">
    <property type="protein sequence ID" value="AAI46757.1"/>
    <property type="molecule type" value="mRNA"/>
</dbReference>
<dbReference type="EMBL" id="AF116574">
    <property type="protein sequence ID" value="AAF14357.1"/>
    <property type="status" value="ALT_INIT"/>
    <property type="molecule type" value="mRNA"/>
</dbReference>
<dbReference type="EMBL" id="DA336442">
    <property type="status" value="NOT_ANNOTATED_CDS"/>
    <property type="molecule type" value="mRNA"/>
</dbReference>
<dbReference type="CCDS" id="CCDS48009.2">
    <molecule id="O75129-4"/>
</dbReference>
<dbReference type="CCDS" id="CCDS6814.1">
    <molecule id="O75129-6"/>
</dbReference>
<dbReference type="CCDS" id="CCDS6815.1">
    <molecule id="O75129-2"/>
</dbReference>
<dbReference type="CCDS" id="CCDS6816.1">
    <molecule id="O75129-1"/>
</dbReference>
<dbReference type="PIR" id="T00382">
    <property type="entry name" value="T00382"/>
</dbReference>
<dbReference type="RefSeq" id="NP_001351997.1">
    <molecule id="O75129-1"/>
    <property type="nucleotide sequence ID" value="NM_001365068.1"/>
</dbReference>
<dbReference type="RefSeq" id="NP_001351998.1">
    <molecule id="O75129-3"/>
    <property type="nucleotide sequence ID" value="NM_001365069.1"/>
</dbReference>
<dbReference type="RefSeq" id="NP_054729.3">
    <molecule id="O75129-2"/>
    <property type="nucleotide sequence ID" value="NM_014010.4"/>
</dbReference>
<dbReference type="RefSeq" id="NP_937829.3">
    <molecule id="O75129-4"/>
    <property type="nucleotide sequence ID" value="NM_198186.3"/>
</dbReference>
<dbReference type="RefSeq" id="NP_937831.1">
    <molecule id="O75129-6"/>
    <property type="nucleotide sequence ID" value="NM_198188.2"/>
</dbReference>
<dbReference type="PDB" id="5J67">
    <property type="method" value="X-ray"/>
    <property type="resolution" value="3.16 A"/>
    <property type="chains" value="A/B/C/D=768-1339"/>
</dbReference>
<dbReference type="PDB" id="5J68">
    <property type="method" value="X-ray"/>
    <property type="resolution" value="5.22 A"/>
    <property type="chains" value="A=768-1339"/>
</dbReference>
<dbReference type="PDB" id="5J69">
    <property type="method" value="X-ray"/>
    <property type="resolution" value="3.63 A"/>
    <property type="chains" value="A/B=768-1033"/>
</dbReference>
<dbReference type="PDBsum" id="5J67"/>
<dbReference type="PDBsum" id="5J68"/>
<dbReference type="PDBsum" id="5J69"/>
<dbReference type="SMR" id="O75129"/>
<dbReference type="BioGRID" id="116849">
    <property type="interactions" value="12"/>
</dbReference>
<dbReference type="FunCoup" id="O75129">
    <property type="interactions" value="153"/>
</dbReference>
<dbReference type="IntAct" id="O75129">
    <property type="interactions" value="5"/>
</dbReference>
<dbReference type="MINT" id="O75129"/>
<dbReference type="STRING" id="9606.ENSP00000354504"/>
<dbReference type="GlyCosmos" id="O75129">
    <property type="glycosylation" value="4 sites, No reported glycans"/>
</dbReference>
<dbReference type="GlyGen" id="O75129">
    <property type="glycosylation" value="8 sites, 1 O-linked glycan (1 site)"/>
</dbReference>
<dbReference type="iPTMnet" id="O75129"/>
<dbReference type="PhosphoSitePlus" id="O75129"/>
<dbReference type="BioMuta" id="ASTN2"/>
<dbReference type="jPOST" id="O75129"/>
<dbReference type="MassIVE" id="O75129"/>
<dbReference type="PaxDb" id="9606-ENSP00000354504"/>
<dbReference type="PeptideAtlas" id="O75129"/>
<dbReference type="ProteomicsDB" id="49788">
    <molecule id="O75129-1"/>
</dbReference>
<dbReference type="ProteomicsDB" id="49789">
    <molecule id="O75129-2"/>
</dbReference>
<dbReference type="ProteomicsDB" id="49790">
    <molecule id="O75129-3"/>
</dbReference>
<dbReference type="ProteomicsDB" id="49791">
    <molecule id="O75129-4"/>
</dbReference>
<dbReference type="ProteomicsDB" id="49792">
    <molecule id="O75129-6"/>
</dbReference>
<dbReference type="Antibodypedia" id="15627">
    <property type="antibodies" value="123 antibodies from 22 providers"/>
</dbReference>
<dbReference type="DNASU" id="23245"/>
<dbReference type="Ensembl" id="ENST00000288520.9">
    <molecule id="O75129-4"/>
    <property type="protein sequence ID" value="ENSP00000288520.5"/>
    <property type="gene ID" value="ENSG00000148219.18"/>
</dbReference>
<dbReference type="Ensembl" id="ENST00000313400.9">
    <molecule id="O75129-1"/>
    <property type="protein sequence ID" value="ENSP00000314038.4"/>
    <property type="gene ID" value="ENSG00000148219.18"/>
</dbReference>
<dbReference type="Ensembl" id="ENST00000341734.8">
    <molecule id="O75129-6"/>
    <property type="protein sequence ID" value="ENSP00000339925.4"/>
    <property type="gene ID" value="ENSG00000148219.18"/>
</dbReference>
<dbReference type="Ensembl" id="ENST00000361209.6">
    <molecule id="O75129-2"/>
    <property type="protein sequence ID" value="ENSP00000354504.2"/>
    <property type="gene ID" value="ENSG00000148219.18"/>
</dbReference>
<dbReference type="GeneID" id="23245"/>
<dbReference type="KEGG" id="hsa:23245"/>
<dbReference type="MANE-Select" id="ENST00000313400.9">
    <property type="protein sequence ID" value="ENSP00000314038.4"/>
    <property type="RefSeq nucleotide sequence ID" value="NM_001365068.1"/>
    <property type="RefSeq protein sequence ID" value="NP_001351997.1"/>
</dbReference>
<dbReference type="UCSC" id="uc004bjp.3">
    <molecule id="O75129-1"/>
    <property type="organism name" value="human"/>
</dbReference>
<dbReference type="AGR" id="HGNC:17021"/>
<dbReference type="CTD" id="23245"/>
<dbReference type="DisGeNET" id="23245"/>
<dbReference type="GeneCards" id="ASTN2"/>
<dbReference type="HGNC" id="HGNC:17021">
    <property type="gene designation" value="ASTN2"/>
</dbReference>
<dbReference type="HPA" id="ENSG00000148219">
    <property type="expression patterns" value="Low tissue specificity"/>
</dbReference>
<dbReference type="MalaCards" id="ASTN2"/>
<dbReference type="MIM" id="612856">
    <property type="type" value="gene"/>
</dbReference>
<dbReference type="neXtProt" id="NX_O75129"/>
<dbReference type="OpenTargets" id="ENSG00000148219"/>
<dbReference type="PharmGKB" id="PA25076"/>
<dbReference type="VEuPathDB" id="HostDB:ENSG00000148219"/>
<dbReference type="eggNOG" id="ENOG502R4QT">
    <property type="taxonomic scope" value="Eukaryota"/>
</dbReference>
<dbReference type="GeneTree" id="ENSGT00390000003140"/>
<dbReference type="HOGENOM" id="CLU_057342_0_0_1"/>
<dbReference type="InParanoid" id="O75129"/>
<dbReference type="OMA" id="VXCPEEL"/>
<dbReference type="OrthoDB" id="9934301at2759"/>
<dbReference type="PAN-GO" id="O75129">
    <property type="GO annotations" value="5 GO annotations based on evolutionary models"/>
</dbReference>
<dbReference type="PhylomeDB" id="O75129"/>
<dbReference type="TreeFam" id="TF332034"/>
<dbReference type="PathwayCommons" id="O75129"/>
<dbReference type="SignaLink" id="O75129"/>
<dbReference type="SIGNOR" id="O75129"/>
<dbReference type="BioGRID-ORCS" id="23245">
    <property type="hits" value="13 hits in 1147 CRISPR screens"/>
</dbReference>
<dbReference type="ChiTaRS" id="ASTN2">
    <property type="organism name" value="human"/>
</dbReference>
<dbReference type="GenomeRNAi" id="23245"/>
<dbReference type="Pharos" id="O75129">
    <property type="development level" value="Tbio"/>
</dbReference>
<dbReference type="PRO" id="PR:O75129"/>
<dbReference type="Proteomes" id="UP000005640">
    <property type="component" value="Chromosome 9"/>
</dbReference>
<dbReference type="RNAct" id="O75129">
    <property type="molecule type" value="protein"/>
</dbReference>
<dbReference type="Bgee" id="ENSG00000148219">
    <property type="expression patterns" value="Expressed in buccal mucosa cell and 162 other cell types or tissues"/>
</dbReference>
<dbReference type="ExpressionAtlas" id="O75129">
    <property type="expression patterns" value="baseline and differential"/>
</dbReference>
<dbReference type="GO" id="GO:0005938">
    <property type="term" value="C:cell cortex"/>
    <property type="evidence" value="ECO:0007669"/>
    <property type="project" value="UniProtKB-SubCell"/>
</dbReference>
<dbReference type="GO" id="GO:0060187">
    <property type="term" value="C:cell pole"/>
    <property type="evidence" value="ECO:0007669"/>
    <property type="project" value="Ensembl"/>
</dbReference>
<dbReference type="GO" id="GO:0030136">
    <property type="term" value="C:clathrin-coated vesicle"/>
    <property type="evidence" value="ECO:0007669"/>
    <property type="project" value="UniProtKB-SubCell"/>
</dbReference>
<dbReference type="GO" id="GO:0005769">
    <property type="term" value="C:early endosome"/>
    <property type="evidence" value="ECO:0007669"/>
    <property type="project" value="UniProtKB-SubCell"/>
</dbReference>
<dbReference type="GO" id="GO:0005768">
    <property type="term" value="C:endosome"/>
    <property type="evidence" value="ECO:0000318"/>
    <property type="project" value="GO_Central"/>
</dbReference>
<dbReference type="GO" id="GO:0005770">
    <property type="term" value="C:late endosome"/>
    <property type="evidence" value="ECO:0007669"/>
    <property type="project" value="UniProtKB-SubCell"/>
</dbReference>
<dbReference type="GO" id="GO:0016020">
    <property type="term" value="C:membrane"/>
    <property type="evidence" value="ECO:0000318"/>
    <property type="project" value="GO_Central"/>
</dbReference>
<dbReference type="GO" id="GO:0043204">
    <property type="term" value="C:perikaryon"/>
    <property type="evidence" value="ECO:0007669"/>
    <property type="project" value="UniProtKB-SubCell"/>
</dbReference>
<dbReference type="GO" id="GO:0005509">
    <property type="term" value="F:calcium ion binding"/>
    <property type="evidence" value="ECO:0000314"/>
    <property type="project" value="UniProtKB"/>
</dbReference>
<dbReference type="GO" id="GO:0043533">
    <property type="term" value="F:inositol 1,3,4,5 tetrakisphosphate binding"/>
    <property type="evidence" value="ECO:0000314"/>
    <property type="project" value="UniProtKB"/>
</dbReference>
<dbReference type="GO" id="GO:0048105">
    <property type="term" value="P:establishment of body hair planar orientation"/>
    <property type="evidence" value="ECO:0007669"/>
    <property type="project" value="Ensembl"/>
</dbReference>
<dbReference type="GO" id="GO:2000009">
    <property type="term" value="P:negative regulation of protein localization to cell surface"/>
    <property type="evidence" value="ECO:0007669"/>
    <property type="project" value="Ensembl"/>
</dbReference>
<dbReference type="GO" id="GO:0007158">
    <property type="term" value="P:neuron cell-cell adhesion"/>
    <property type="evidence" value="ECO:0000318"/>
    <property type="project" value="GO_Central"/>
</dbReference>
<dbReference type="GO" id="GO:0001764">
    <property type="term" value="P:neuron migration"/>
    <property type="evidence" value="ECO:0000318"/>
    <property type="project" value="GO_Central"/>
</dbReference>
<dbReference type="GO" id="GO:0034394">
    <property type="term" value="P:protein localization to cell surface"/>
    <property type="evidence" value="ECO:0007669"/>
    <property type="project" value="Ensembl"/>
</dbReference>
<dbReference type="GO" id="GO:0015031">
    <property type="term" value="P:protein transport"/>
    <property type="evidence" value="ECO:0007669"/>
    <property type="project" value="UniProtKB-KW"/>
</dbReference>
<dbReference type="FunFam" id="2.10.25.10:FF:000288">
    <property type="entry name" value="Astrotactin 2"/>
    <property type="match status" value="1"/>
</dbReference>
<dbReference type="Gene3D" id="2.10.25.10">
    <property type="entry name" value="Laminin"/>
    <property type="match status" value="1"/>
</dbReference>
<dbReference type="InterPro" id="IPR040685">
    <property type="entry name" value="Annexin-like"/>
</dbReference>
<dbReference type="InterPro" id="IPR045574">
    <property type="entry name" value="ASTN1_2_Fn3"/>
</dbReference>
<dbReference type="InterPro" id="IPR045575">
    <property type="entry name" value="ASTN_1_2_N"/>
</dbReference>
<dbReference type="InterPro" id="IPR040510">
    <property type="entry name" value="ASTN_2_hairpin"/>
</dbReference>
<dbReference type="InterPro" id="IPR026995">
    <property type="entry name" value="Astrotactin"/>
</dbReference>
<dbReference type="InterPro" id="IPR036116">
    <property type="entry name" value="FN3_sf"/>
</dbReference>
<dbReference type="InterPro" id="IPR020864">
    <property type="entry name" value="MACPF"/>
</dbReference>
<dbReference type="PANTHER" id="PTHR16592">
    <property type="entry name" value="ASTROTACTIN-1-LIKE"/>
    <property type="match status" value="1"/>
</dbReference>
<dbReference type="PANTHER" id="PTHR16592:SF2">
    <property type="entry name" value="ASTROTACTIN-2"/>
    <property type="match status" value="1"/>
</dbReference>
<dbReference type="Pfam" id="PF18411">
    <property type="entry name" value="Annexin_2"/>
    <property type="match status" value="1"/>
</dbReference>
<dbReference type="Pfam" id="PF19743">
    <property type="entry name" value="ASTN1_2_fn3"/>
    <property type="match status" value="1"/>
</dbReference>
<dbReference type="Pfam" id="PF19441">
    <property type="entry name" value="ASTN_1_2_N"/>
    <property type="match status" value="1"/>
</dbReference>
<dbReference type="Pfam" id="PF18577">
    <property type="entry name" value="ASTN_2_hairpin"/>
    <property type="match status" value="1"/>
</dbReference>
<dbReference type="Pfam" id="PF01823">
    <property type="entry name" value="MACPF"/>
    <property type="match status" value="1"/>
</dbReference>
<dbReference type="SMART" id="SM00457">
    <property type="entry name" value="MACPF"/>
    <property type="match status" value="1"/>
</dbReference>
<dbReference type="SUPFAM" id="SSF49265">
    <property type="entry name" value="Fibronectin type III"/>
    <property type="match status" value="1"/>
</dbReference>
<accession>O75129</accession>
<accession>A2A2T7</accession>
<accession>A2A2T9</accession>
<accession>Q52LQ2</accession>
<accession>Q5JVX8</accession>
<accession>Q5JVX9</accession>
<accession>Q5JVY1</accession>
<accession>Q5VXG8</accession>
<accession>Q5VZX6</accession>
<accession>Q8N6P8</accession>
<accession>Q8WV47</accession>
<accession>Q96FL4</accession>
<accession>Q9UHW6</accession>
<reference key="1">
    <citation type="journal article" date="1998" name="DNA Res.">
        <title>Prediction of the coding sequences of unidentified human genes. X. The complete sequences of 100 new cDNA clones from brain which can code for large proteins in vitro.</title>
        <authorList>
            <person name="Ishikawa K."/>
            <person name="Nagase T."/>
            <person name="Suyama M."/>
            <person name="Miyajima N."/>
            <person name="Tanaka A."/>
            <person name="Kotani H."/>
            <person name="Nomura N."/>
            <person name="Ohara O."/>
        </authorList>
    </citation>
    <scope>NUCLEOTIDE SEQUENCE [LARGE SCALE MRNA] (ISOFORM 2)</scope>
    <source>
        <tissue>Brain</tissue>
    </source>
</reference>
<reference key="2">
    <citation type="journal article" date="2004" name="Nature">
        <title>DNA sequence and analysis of human chromosome 9.</title>
        <authorList>
            <person name="Humphray S.J."/>
            <person name="Oliver K."/>
            <person name="Hunt A.R."/>
            <person name="Plumb R.W."/>
            <person name="Loveland J.E."/>
            <person name="Howe K.L."/>
            <person name="Andrews T.D."/>
            <person name="Searle S."/>
            <person name="Hunt S.E."/>
            <person name="Scott C.E."/>
            <person name="Jones M.C."/>
            <person name="Ainscough R."/>
            <person name="Almeida J.P."/>
            <person name="Ambrose K.D."/>
            <person name="Ashwell R.I.S."/>
            <person name="Babbage A.K."/>
            <person name="Babbage S."/>
            <person name="Bagguley C.L."/>
            <person name="Bailey J."/>
            <person name="Banerjee R."/>
            <person name="Barker D.J."/>
            <person name="Barlow K.F."/>
            <person name="Bates K."/>
            <person name="Beasley H."/>
            <person name="Beasley O."/>
            <person name="Bird C.P."/>
            <person name="Bray-Allen S."/>
            <person name="Brown A.J."/>
            <person name="Brown J.Y."/>
            <person name="Burford D."/>
            <person name="Burrill W."/>
            <person name="Burton J."/>
            <person name="Carder C."/>
            <person name="Carter N.P."/>
            <person name="Chapman J.C."/>
            <person name="Chen Y."/>
            <person name="Clarke G."/>
            <person name="Clark S.Y."/>
            <person name="Clee C.M."/>
            <person name="Clegg S."/>
            <person name="Collier R.E."/>
            <person name="Corby N."/>
            <person name="Crosier M."/>
            <person name="Cummings A.T."/>
            <person name="Davies J."/>
            <person name="Dhami P."/>
            <person name="Dunn M."/>
            <person name="Dutta I."/>
            <person name="Dyer L.W."/>
            <person name="Earthrowl M.E."/>
            <person name="Faulkner L."/>
            <person name="Fleming C.J."/>
            <person name="Frankish A."/>
            <person name="Frankland J.A."/>
            <person name="French L."/>
            <person name="Fricker D.G."/>
            <person name="Garner P."/>
            <person name="Garnett J."/>
            <person name="Ghori J."/>
            <person name="Gilbert J.G.R."/>
            <person name="Glison C."/>
            <person name="Grafham D.V."/>
            <person name="Gribble S."/>
            <person name="Griffiths C."/>
            <person name="Griffiths-Jones S."/>
            <person name="Grocock R."/>
            <person name="Guy J."/>
            <person name="Hall R.E."/>
            <person name="Hammond S."/>
            <person name="Harley J.L."/>
            <person name="Harrison E.S.I."/>
            <person name="Hart E.A."/>
            <person name="Heath P.D."/>
            <person name="Henderson C.D."/>
            <person name="Hopkins B.L."/>
            <person name="Howard P.J."/>
            <person name="Howden P.J."/>
            <person name="Huckle E."/>
            <person name="Johnson C."/>
            <person name="Johnson D."/>
            <person name="Joy A.A."/>
            <person name="Kay M."/>
            <person name="Keenan S."/>
            <person name="Kershaw J.K."/>
            <person name="Kimberley A.M."/>
            <person name="King A."/>
            <person name="Knights A."/>
            <person name="Laird G.K."/>
            <person name="Langford C."/>
            <person name="Lawlor S."/>
            <person name="Leongamornlert D.A."/>
            <person name="Leversha M."/>
            <person name="Lloyd C."/>
            <person name="Lloyd D.M."/>
            <person name="Lovell J."/>
            <person name="Martin S."/>
            <person name="Mashreghi-Mohammadi M."/>
            <person name="Matthews L."/>
            <person name="McLaren S."/>
            <person name="McLay K.E."/>
            <person name="McMurray A."/>
            <person name="Milne S."/>
            <person name="Nickerson T."/>
            <person name="Nisbett J."/>
            <person name="Nordsiek G."/>
            <person name="Pearce A.V."/>
            <person name="Peck A.I."/>
            <person name="Porter K.M."/>
            <person name="Pandian R."/>
            <person name="Pelan S."/>
            <person name="Phillimore B."/>
            <person name="Povey S."/>
            <person name="Ramsey Y."/>
            <person name="Rand V."/>
            <person name="Scharfe M."/>
            <person name="Sehra H.K."/>
            <person name="Shownkeen R."/>
            <person name="Sims S.K."/>
            <person name="Skuce C.D."/>
            <person name="Smith M."/>
            <person name="Steward C.A."/>
            <person name="Swarbreck D."/>
            <person name="Sycamore N."/>
            <person name="Tester J."/>
            <person name="Thorpe A."/>
            <person name="Tracey A."/>
            <person name="Tromans A."/>
            <person name="Thomas D.W."/>
            <person name="Wall M."/>
            <person name="Wallis J.M."/>
            <person name="West A.P."/>
            <person name="Whitehead S.L."/>
            <person name="Willey D.L."/>
            <person name="Williams S.A."/>
            <person name="Wilming L."/>
            <person name="Wray P.W."/>
            <person name="Young L."/>
            <person name="Ashurst J.L."/>
            <person name="Coulson A."/>
            <person name="Blocker H."/>
            <person name="Durbin R.M."/>
            <person name="Sulston J.E."/>
            <person name="Hubbard T."/>
            <person name="Jackson M.J."/>
            <person name="Bentley D.R."/>
            <person name="Beck S."/>
            <person name="Rogers J."/>
            <person name="Dunham I."/>
        </authorList>
    </citation>
    <scope>NUCLEOTIDE SEQUENCE [LARGE SCALE GENOMIC DNA]</scope>
</reference>
<reference key="3">
    <citation type="journal article" date="2004" name="Genome Res.">
        <title>The status, quality, and expansion of the NIH full-length cDNA project: the Mammalian Gene Collection (MGC).</title>
        <authorList>
            <consortium name="The MGC Project Team"/>
        </authorList>
    </citation>
    <scope>NUCLEOTIDE SEQUENCE [LARGE SCALE MRNA] (ISOFORMS 2; 4 AND 6)</scope>
    <scope>NUCLEOTIDE SEQUENCE [LARGE SCALE MRNA] OF 532-1339 (ISOFORM 3)</scope>
    <source>
        <tissue>Brain</tissue>
        <tissue>Cervix</tissue>
        <tissue>Eye</tissue>
    </source>
</reference>
<reference key="4">
    <citation type="submission" date="1998-12" db="EMBL/GenBank/DDBJ databases">
        <title>Molecular cloning of human astrotactin-2.</title>
        <authorList>
            <person name="Tomoda T."/>
        </authorList>
    </citation>
    <scope>NUCLEOTIDE SEQUENCE [MRNA] OF 227-1339 (ISOFORM 2)</scope>
    <source>
        <tissue>Uterus</tissue>
    </source>
</reference>
<reference key="5">
    <citation type="journal article" date="2004" name="Nat. Genet.">
        <title>Complete sequencing and characterization of 21,243 full-length human cDNAs.</title>
        <authorList>
            <person name="Ota T."/>
            <person name="Suzuki Y."/>
            <person name="Nishikawa T."/>
            <person name="Otsuki T."/>
            <person name="Sugiyama T."/>
            <person name="Irie R."/>
            <person name="Wakamatsu A."/>
            <person name="Hayashi K."/>
            <person name="Sato H."/>
            <person name="Nagai K."/>
            <person name="Kimura K."/>
            <person name="Makita H."/>
            <person name="Sekine M."/>
            <person name="Obayashi M."/>
            <person name="Nishi T."/>
            <person name="Shibahara T."/>
            <person name="Tanaka T."/>
            <person name="Ishii S."/>
            <person name="Yamamoto J."/>
            <person name="Saito K."/>
            <person name="Kawai Y."/>
            <person name="Isono Y."/>
            <person name="Nakamura Y."/>
            <person name="Nagahari K."/>
            <person name="Murakami K."/>
            <person name="Yasuda T."/>
            <person name="Iwayanagi T."/>
            <person name="Wagatsuma M."/>
            <person name="Shiratori A."/>
            <person name="Sudo H."/>
            <person name="Hosoiri T."/>
            <person name="Kaku Y."/>
            <person name="Kodaira H."/>
            <person name="Kondo H."/>
            <person name="Sugawara M."/>
            <person name="Takahashi M."/>
            <person name="Kanda K."/>
            <person name="Yokoi T."/>
            <person name="Furuya T."/>
            <person name="Kikkawa E."/>
            <person name="Omura Y."/>
            <person name="Abe K."/>
            <person name="Kamihara K."/>
            <person name="Katsuta N."/>
            <person name="Sato K."/>
            <person name="Tanikawa M."/>
            <person name="Yamazaki M."/>
            <person name="Ninomiya K."/>
            <person name="Ishibashi T."/>
            <person name="Yamashita H."/>
            <person name="Murakawa K."/>
            <person name="Fujimori K."/>
            <person name="Tanai H."/>
            <person name="Kimata M."/>
            <person name="Watanabe M."/>
            <person name="Hiraoka S."/>
            <person name="Chiba Y."/>
            <person name="Ishida S."/>
            <person name="Ono Y."/>
            <person name="Takiguchi S."/>
            <person name="Watanabe S."/>
            <person name="Yosida M."/>
            <person name="Hotuta T."/>
            <person name="Kusano J."/>
            <person name="Kanehori K."/>
            <person name="Takahashi-Fujii A."/>
            <person name="Hara H."/>
            <person name="Tanase T.-O."/>
            <person name="Nomura Y."/>
            <person name="Togiya S."/>
            <person name="Komai F."/>
            <person name="Hara R."/>
            <person name="Takeuchi K."/>
            <person name="Arita M."/>
            <person name="Imose N."/>
            <person name="Musashino K."/>
            <person name="Yuuki H."/>
            <person name="Oshima A."/>
            <person name="Sasaki N."/>
            <person name="Aotsuka S."/>
            <person name="Yoshikawa Y."/>
            <person name="Matsunawa H."/>
            <person name="Ichihara T."/>
            <person name="Shiohata N."/>
            <person name="Sano S."/>
            <person name="Moriya S."/>
            <person name="Momiyama H."/>
            <person name="Satoh N."/>
            <person name="Takami S."/>
            <person name="Terashima Y."/>
            <person name="Suzuki O."/>
            <person name="Nakagawa S."/>
            <person name="Senoh A."/>
            <person name="Mizoguchi H."/>
            <person name="Goto Y."/>
            <person name="Shimizu F."/>
            <person name="Wakebe H."/>
            <person name="Hishigaki H."/>
            <person name="Watanabe T."/>
            <person name="Sugiyama A."/>
            <person name="Takemoto M."/>
            <person name="Kawakami B."/>
            <person name="Yamazaki M."/>
            <person name="Watanabe K."/>
            <person name="Kumagai A."/>
            <person name="Itakura S."/>
            <person name="Fukuzumi Y."/>
            <person name="Fujimori Y."/>
            <person name="Komiyama M."/>
            <person name="Tashiro H."/>
            <person name="Tanigami A."/>
            <person name="Fujiwara T."/>
            <person name="Ono T."/>
            <person name="Yamada K."/>
            <person name="Fujii Y."/>
            <person name="Ozaki K."/>
            <person name="Hirao M."/>
            <person name="Ohmori Y."/>
            <person name="Kawabata A."/>
            <person name="Hikiji T."/>
            <person name="Kobatake N."/>
            <person name="Inagaki H."/>
            <person name="Ikema Y."/>
            <person name="Okamoto S."/>
            <person name="Okitani R."/>
            <person name="Kawakami T."/>
            <person name="Noguchi S."/>
            <person name="Itoh T."/>
            <person name="Shigeta K."/>
            <person name="Senba T."/>
            <person name="Matsumura K."/>
            <person name="Nakajima Y."/>
            <person name="Mizuno T."/>
            <person name="Morinaga M."/>
            <person name="Sasaki M."/>
            <person name="Togashi T."/>
            <person name="Oyama M."/>
            <person name="Hata H."/>
            <person name="Watanabe M."/>
            <person name="Komatsu T."/>
            <person name="Mizushima-Sugano J."/>
            <person name="Satoh T."/>
            <person name="Shirai Y."/>
            <person name="Takahashi Y."/>
            <person name="Nakagawa K."/>
            <person name="Okumura K."/>
            <person name="Nagase T."/>
            <person name="Nomura N."/>
            <person name="Kikuchi H."/>
            <person name="Masuho Y."/>
            <person name="Yamashita R."/>
            <person name="Nakai K."/>
            <person name="Yada T."/>
            <person name="Nakamura Y."/>
            <person name="Ohara O."/>
            <person name="Isogai T."/>
            <person name="Sugano S."/>
        </authorList>
    </citation>
    <scope>NUCLEOTIDE SEQUENCE [LARGE SCALE MRNA] OF 274-470 (ISOFORM 1)</scope>
</reference>
<reference key="6">
    <citation type="journal article" date="2016" name="Open Biol.">
        <title>Structure of astrotactin-2: a conserved vertebrate-specific and perforin-like membrane protein involved in neuronal development.</title>
        <authorList>
            <person name="Ni T."/>
            <person name="Harlos K."/>
            <person name="Gilbert R."/>
        </authorList>
    </citation>
    <scope>X-RAY CRYSTALLOGRAPHY (3.16 ANGSTROMS) OF 768-1339</scope>
    <scope>DISULFIDE BONDS</scope>
    <scope>GLYCOSYLATION AT ASN-770 AND ASN-783</scope>
    <scope>CALCIUM-BINDING</scope>
    <scope>FUNCTION</scope>
    <scope>MUTAGENESIS OF ARG-1175</scope>
    <scope>DOMAIN</scope>
</reference>
<reference key="7">
    <citation type="journal article" date="2006" name="Science">
        <title>The consensus coding sequences of human breast and colorectal cancers.</title>
        <authorList>
            <person name="Sjoeblom T."/>
            <person name="Jones S."/>
            <person name="Wood L.D."/>
            <person name="Parsons D.W."/>
            <person name="Lin J."/>
            <person name="Barber T.D."/>
            <person name="Mandelker D."/>
            <person name="Leary R.J."/>
            <person name="Ptak J."/>
            <person name="Silliman N."/>
            <person name="Szabo S."/>
            <person name="Buckhaults P."/>
            <person name="Farrell C."/>
            <person name="Meeh P."/>
            <person name="Markowitz S.D."/>
            <person name="Willis J."/>
            <person name="Dawson D."/>
            <person name="Willson J.K.V."/>
            <person name="Gazdar A.F."/>
            <person name="Hartigan J."/>
            <person name="Wu L."/>
            <person name="Liu C."/>
            <person name="Parmigiani G."/>
            <person name="Park B.H."/>
            <person name="Bachman K.E."/>
            <person name="Papadopoulos N."/>
            <person name="Vogelstein B."/>
            <person name="Kinzler K.W."/>
            <person name="Velculescu V.E."/>
        </authorList>
    </citation>
    <scope>VARIANT [LARGE SCALE ANALYSIS] LEU-1293</scope>
</reference>
<reference key="8">
    <citation type="journal article" date="2011" name="Nature">
        <title>Exome sequencing identifies frequent mutation of the SWI/SNF complex gene PBRM1 in renal carcinoma.</title>
        <authorList>
            <person name="Varela I."/>
            <person name="Tarpey P."/>
            <person name="Raine K."/>
            <person name="Huang D."/>
            <person name="Ong C.K."/>
            <person name="Stephens P."/>
            <person name="Davies H."/>
            <person name="Jones D."/>
            <person name="Lin M.L."/>
            <person name="Teague J."/>
            <person name="Bignell G."/>
            <person name="Butler A."/>
            <person name="Cho J."/>
            <person name="Dalgliesh G.L."/>
            <person name="Galappaththige D."/>
            <person name="Greenman C."/>
            <person name="Hardy C."/>
            <person name="Jia M."/>
            <person name="Latimer C."/>
            <person name="Lau K.W."/>
            <person name="Marshall J."/>
            <person name="McLaren S."/>
            <person name="Menzies A."/>
            <person name="Mudie L."/>
            <person name="Stebbings L."/>
            <person name="Largaespada D.A."/>
            <person name="Wessels L.F.A."/>
            <person name="Richard S."/>
            <person name="Kahnoski R.J."/>
            <person name="Anema J."/>
            <person name="Tuveson D.A."/>
            <person name="Perez-Mancera P.A."/>
            <person name="Mustonen V."/>
            <person name="Fischer A."/>
            <person name="Adams D.J."/>
            <person name="Rust A."/>
            <person name="Chan-On W."/>
            <person name="Subimerb C."/>
            <person name="Dykema K."/>
            <person name="Furge K."/>
            <person name="Campbell P.J."/>
            <person name="Teh B.T."/>
            <person name="Stratton M.R."/>
            <person name="Futreal P.A."/>
        </authorList>
    </citation>
    <scope>VARIANT VAL-229</scope>
</reference>
<reference key="9">
    <citation type="journal article" date="2017" name="Hum. Genet.">
        <title>Expanding the genetic heterogeneity of intellectual disability.</title>
        <authorList>
            <person name="Anazi S."/>
            <person name="Maddirevula S."/>
            <person name="Salpietro V."/>
            <person name="Asi Y.T."/>
            <person name="Alsahli S."/>
            <person name="Alhashem A."/>
            <person name="Shamseldin H.E."/>
            <person name="AlZahrani F."/>
            <person name="Patel N."/>
            <person name="Ibrahim N."/>
            <person name="Abdulwahab F.M."/>
            <person name="Hashem M."/>
            <person name="Alhashmi N."/>
            <person name="Al Murshedi F."/>
            <person name="Al Kindy A."/>
            <person name="Alshaer A."/>
            <person name="Rumayyan A."/>
            <person name="Al Tala S."/>
            <person name="Kurdi W."/>
            <person name="Alsaman A."/>
            <person name="Alasmari A."/>
            <person name="Banu S."/>
            <person name="Sultan T."/>
            <person name="Saleh M.M."/>
            <person name="Alkuraya H."/>
            <person name="Salih M.A."/>
            <person name="Aldhalaan H."/>
            <person name="Ben-Omran T."/>
            <person name="Al Musafri F."/>
            <person name="Ali R."/>
            <person name="Suleiman J."/>
            <person name="Tabarki B."/>
            <person name="El-Hattab A.W."/>
            <person name="Bupp C."/>
            <person name="Alfadhel M."/>
            <person name="Al Tassan N."/>
            <person name="Monies D."/>
            <person name="Arold S.T."/>
            <person name="Abouelhoda M."/>
            <person name="Lashley T."/>
            <person name="Houlden H."/>
            <person name="Faqeih E."/>
            <person name="Alkuraya F.S."/>
        </authorList>
    </citation>
    <scope>VARIANT HIS-298</scope>
</reference>
<reference key="10">
    <citation type="journal article" date="2018" name="Hum. Genet.">
        <title>Correction to: Expanding the genetic heterogeneity of intellectual disability.</title>
        <authorList>
            <person name="Anazi S."/>
            <person name="Maddirevula S."/>
            <person name="Salpietro V."/>
            <person name="Asi Y.T."/>
            <person name="Alsahli S."/>
            <person name="Alhashem A."/>
            <person name="Shamseldin H.E."/>
            <person name="AlZahrani F."/>
            <person name="Patel N."/>
            <person name="Ibrahim N."/>
            <person name="Abdulwahab F.M."/>
            <person name="Hashem M."/>
            <person name="Alhashmi N."/>
            <person name="Al Murshedi F."/>
            <person name="Al Kindy A."/>
            <person name="Alshaer A."/>
            <person name="Rumayyan A."/>
            <person name="Al Tala S."/>
            <person name="Kurdi W."/>
            <person name="Alsaman A."/>
            <person name="Alasmari A."/>
            <person name="Banu S."/>
            <person name="Sultan T."/>
            <person name="Saleh M.M."/>
            <person name="Alkuraya H."/>
            <person name="Salih M.A."/>
            <person name="Aldhalaan H."/>
            <person name="Ben-Omran T."/>
            <person name="Al Musafri F."/>
            <person name="Ali R."/>
            <person name="Suleiman J."/>
            <person name="Tabarki B."/>
            <person name="El-Hattab A.W."/>
            <person name="Bupp C."/>
            <person name="Alfadhel M."/>
            <person name="Al Tassan N."/>
            <person name="Monies D."/>
            <person name="Arold S.T."/>
            <person name="Abouelhoda M."/>
            <person name="Lashley T."/>
            <person name="Houlden H."/>
            <person name="Faqeih E."/>
            <person name="Alkuraya F.S."/>
        </authorList>
    </citation>
    <scope>ERRATUM OF PUBMED:28940097</scope>
</reference>